<accession>Q1CJI6</accession>
<accession>C4GSD5</accession>
<name>Y1514_YERPN</name>
<organism>
    <name type="scientific">Yersinia pestis bv. Antiqua (strain Nepal516)</name>
    <dbReference type="NCBI Taxonomy" id="377628"/>
    <lineage>
        <taxon>Bacteria</taxon>
        <taxon>Pseudomonadati</taxon>
        <taxon>Pseudomonadota</taxon>
        <taxon>Gammaproteobacteria</taxon>
        <taxon>Enterobacterales</taxon>
        <taxon>Yersiniaceae</taxon>
        <taxon>Yersinia</taxon>
    </lineage>
</organism>
<dbReference type="EC" id="3.1.3.-" evidence="1"/>
<dbReference type="EMBL" id="CP000305">
    <property type="protein sequence ID" value="ABG17844.1"/>
    <property type="molecule type" value="Genomic_DNA"/>
</dbReference>
<dbReference type="EMBL" id="ACNQ01000009">
    <property type="protein sequence ID" value="EEO76945.1"/>
    <property type="molecule type" value="Genomic_DNA"/>
</dbReference>
<dbReference type="RefSeq" id="WP_002211221.1">
    <property type="nucleotide sequence ID" value="NZ_ACNQ01000009.1"/>
</dbReference>
<dbReference type="SMR" id="Q1CJI6"/>
<dbReference type="KEGG" id="ypn:YPN_1514"/>
<dbReference type="HOGENOM" id="CLU_061999_0_1_6"/>
<dbReference type="Proteomes" id="UP000008936">
    <property type="component" value="Chromosome"/>
</dbReference>
<dbReference type="GO" id="GO:0005829">
    <property type="term" value="C:cytosol"/>
    <property type="evidence" value="ECO:0007669"/>
    <property type="project" value="TreeGrafter"/>
</dbReference>
<dbReference type="GO" id="GO:0016791">
    <property type="term" value="F:phosphatase activity"/>
    <property type="evidence" value="ECO:0007669"/>
    <property type="project" value="UniProtKB-UniRule"/>
</dbReference>
<dbReference type="GO" id="GO:0008270">
    <property type="term" value="F:zinc ion binding"/>
    <property type="evidence" value="ECO:0007669"/>
    <property type="project" value="UniProtKB-UniRule"/>
</dbReference>
<dbReference type="GO" id="GO:0071978">
    <property type="term" value="P:bacterial-type flagellum-dependent swarming motility"/>
    <property type="evidence" value="ECO:0007669"/>
    <property type="project" value="TreeGrafter"/>
</dbReference>
<dbReference type="CDD" id="cd07437">
    <property type="entry name" value="PHP_HisPPase_Ycdx_like"/>
    <property type="match status" value="1"/>
</dbReference>
<dbReference type="FunFam" id="3.20.20.140:FF:000008">
    <property type="entry name" value="Probable phosphatase YcdX"/>
    <property type="match status" value="1"/>
</dbReference>
<dbReference type="Gene3D" id="3.20.20.140">
    <property type="entry name" value="Metal-dependent hydrolases"/>
    <property type="match status" value="1"/>
</dbReference>
<dbReference type="HAMAP" id="MF_01561">
    <property type="entry name" value="YcdX_phosphat"/>
    <property type="match status" value="1"/>
</dbReference>
<dbReference type="InterPro" id="IPR023710">
    <property type="entry name" value="Phosphatase_YcdX_put"/>
</dbReference>
<dbReference type="InterPro" id="IPR004013">
    <property type="entry name" value="PHP_dom"/>
</dbReference>
<dbReference type="InterPro" id="IPR050243">
    <property type="entry name" value="PHP_phosphatase"/>
</dbReference>
<dbReference type="InterPro" id="IPR003141">
    <property type="entry name" value="Pol/His_phosphatase_N"/>
</dbReference>
<dbReference type="InterPro" id="IPR016195">
    <property type="entry name" value="Pol/histidinol_Pase-like"/>
</dbReference>
<dbReference type="NCBIfam" id="NF006702">
    <property type="entry name" value="PRK09248.1"/>
    <property type="match status" value="1"/>
</dbReference>
<dbReference type="PANTHER" id="PTHR36928">
    <property type="entry name" value="PHOSPHATASE YCDX-RELATED"/>
    <property type="match status" value="1"/>
</dbReference>
<dbReference type="PANTHER" id="PTHR36928:SF1">
    <property type="entry name" value="PHOSPHATASE YCDX-RELATED"/>
    <property type="match status" value="1"/>
</dbReference>
<dbReference type="Pfam" id="PF02811">
    <property type="entry name" value="PHP"/>
    <property type="match status" value="1"/>
</dbReference>
<dbReference type="SMART" id="SM00481">
    <property type="entry name" value="POLIIIAc"/>
    <property type="match status" value="1"/>
</dbReference>
<dbReference type="SUPFAM" id="SSF89550">
    <property type="entry name" value="PHP domain-like"/>
    <property type="match status" value="1"/>
</dbReference>
<sequence>MYPVDLHMHTVASTHAYSTLHDYIAEAKLKNIKLFAITDHGPDMADAPHYWHFMNMRVWPRLVDGVGILRGIEANIKNLDGDIDCTGPMLDAVDLLIAGFHEPVFPPQDKAANTQAMIATMAQGNVHIISHPGNPKYPVDIPAIAQAAAKYNVALELNNSSFAHSRKGSEANCRAIAAAVRDAGGWLALGSDSHIAYALGIFEHCERIIAEVNFPQERILNVSPRRLLDYLEQRGRPAIPELAEL</sequence>
<reference key="1">
    <citation type="journal article" date="2006" name="J. Bacteriol.">
        <title>Complete genome sequence of Yersinia pestis strains Antiqua and Nepal516: evidence of gene reduction in an emerging pathogen.</title>
        <authorList>
            <person name="Chain P.S.G."/>
            <person name="Hu P."/>
            <person name="Malfatti S.A."/>
            <person name="Radnedge L."/>
            <person name="Larimer F."/>
            <person name="Vergez L.M."/>
            <person name="Worsham P."/>
            <person name="Chu M.C."/>
            <person name="Andersen G.L."/>
        </authorList>
    </citation>
    <scope>NUCLEOTIDE SEQUENCE [LARGE SCALE GENOMIC DNA]</scope>
    <source>
        <strain>Nepal516</strain>
    </source>
</reference>
<reference key="2">
    <citation type="submission" date="2009-04" db="EMBL/GenBank/DDBJ databases">
        <title>Yersinia pestis Nepal516A whole genome shotgun sequencing project.</title>
        <authorList>
            <person name="Plunkett G. III"/>
            <person name="Anderson B.D."/>
            <person name="Baumler D.J."/>
            <person name="Burland V."/>
            <person name="Cabot E.L."/>
            <person name="Glasner J.D."/>
            <person name="Mau B."/>
            <person name="Neeno-Eckwall E."/>
            <person name="Perna N.T."/>
            <person name="Munk A.C."/>
            <person name="Tapia R."/>
            <person name="Green L.D."/>
            <person name="Rogers Y.C."/>
            <person name="Detter J.C."/>
            <person name="Bruce D.C."/>
            <person name="Brettin T.S."/>
        </authorList>
    </citation>
    <scope>NUCLEOTIDE SEQUENCE [LARGE SCALE GENOMIC DNA]</scope>
    <source>
        <strain>Nepal516</strain>
    </source>
</reference>
<keyword id="KW-0378">Hydrolase</keyword>
<keyword id="KW-0479">Metal-binding</keyword>
<keyword id="KW-0862">Zinc</keyword>
<protein>
    <recommendedName>
        <fullName evidence="1">Probable phosphatase YPN_1514</fullName>
        <ecNumber evidence="1">3.1.3.-</ecNumber>
    </recommendedName>
</protein>
<gene>
    <name type="ordered locus">YPN_1514</name>
    <name type="ORF">YP516_1677</name>
</gene>
<feature type="chain" id="PRO_1000069038" description="Probable phosphatase YPN_1514">
    <location>
        <begin position="1"/>
        <end position="245"/>
    </location>
</feature>
<feature type="binding site" evidence="1">
    <location>
        <position position="7"/>
    </location>
    <ligand>
        <name>Zn(2+)</name>
        <dbReference type="ChEBI" id="CHEBI:29105"/>
        <label>1</label>
    </ligand>
</feature>
<feature type="binding site" evidence="1">
    <location>
        <position position="9"/>
    </location>
    <ligand>
        <name>Zn(2+)</name>
        <dbReference type="ChEBI" id="CHEBI:29105"/>
        <label>1</label>
    </ligand>
</feature>
<feature type="binding site" evidence="1">
    <location>
        <position position="15"/>
    </location>
    <ligand>
        <name>Zn(2+)</name>
        <dbReference type="ChEBI" id="CHEBI:29105"/>
        <label>2</label>
    </ligand>
</feature>
<feature type="binding site" evidence="1">
    <location>
        <position position="40"/>
    </location>
    <ligand>
        <name>Zn(2+)</name>
        <dbReference type="ChEBI" id="CHEBI:29105"/>
        <label>2</label>
    </ligand>
</feature>
<feature type="binding site" evidence="1">
    <location>
        <position position="73"/>
    </location>
    <ligand>
        <name>Zn(2+)</name>
        <dbReference type="ChEBI" id="CHEBI:29105"/>
        <label>1</label>
    </ligand>
</feature>
<feature type="binding site" evidence="1">
    <location>
        <position position="73"/>
    </location>
    <ligand>
        <name>Zn(2+)</name>
        <dbReference type="ChEBI" id="CHEBI:29105"/>
        <label>3</label>
    </ligand>
</feature>
<feature type="binding site" evidence="1">
    <location>
        <position position="101"/>
    </location>
    <ligand>
        <name>Zn(2+)</name>
        <dbReference type="ChEBI" id="CHEBI:29105"/>
        <label>3</label>
    </ligand>
</feature>
<feature type="binding site" evidence="1">
    <location>
        <position position="131"/>
    </location>
    <ligand>
        <name>Zn(2+)</name>
        <dbReference type="ChEBI" id="CHEBI:29105"/>
        <label>3</label>
    </ligand>
</feature>
<feature type="binding site" evidence="1">
    <location>
        <position position="192"/>
    </location>
    <ligand>
        <name>Zn(2+)</name>
        <dbReference type="ChEBI" id="CHEBI:29105"/>
        <label>1</label>
    </ligand>
</feature>
<feature type="binding site" evidence="1">
    <location>
        <position position="194"/>
    </location>
    <ligand>
        <name>Zn(2+)</name>
        <dbReference type="ChEBI" id="CHEBI:29105"/>
        <label>2</label>
    </ligand>
</feature>
<comment type="cofactor">
    <cofactor evidence="1">
        <name>Zn(2+)</name>
        <dbReference type="ChEBI" id="CHEBI:29105"/>
    </cofactor>
    <text evidence="1">Binds 3 Zn(2+) ions per subunit.</text>
</comment>
<comment type="subunit">
    <text evidence="1">Homotrimer.</text>
</comment>
<comment type="similarity">
    <text evidence="1">Belongs to the PHP family.</text>
</comment>
<evidence type="ECO:0000255" key="1">
    <source>
        <dbReference type="HAMAP-Rule" id="MF_01561"/>
    </source>
</evidence>
<proteinExistence type="inferred from homology"/>